<comment type="function">
    <text evidence="1">Catalyzes the reduction of the glycolytic intermediate dihydroxyacetone phosphate (DHAP) to sn-glycerol 3-phosphate (G3P), the key precursor for phospholipid synthesis.</text>
</comment>
<comment type="catalytic activity">
    <reaction evidence="1">
        <text>sn-glycerol 3-phosphate + NAD(+) = dihydroxyacetone phosphate + NADH + H(+)</text>
        <dbReference type="Rhea" id="RHEA:11092"/>
        <dbReference type="ChEBI" id="CHEBI:15378"/>
        <dbReference type="ChEBI" id="CHEBI:57540"/>
        <dbReference type="ChEBI" id="CHEBI:57597"/>
        <dbReference type="ChEBI" id="CHEBI:57642"/>
        <dbReference type="ChEBI" id="CHEBI:57945"/>
        <dbReference type="EC" id="1.1.1.94"/>
    </reaction>
    <physiologicalReaction direction="right-to-left" evidence="1">
        <dbReference type="Rhea" id="RHEA:11094"/>
    </physiologicalReaction>
</comment>
<comment type="catalytic activity">
    <reaction evidence="1">
        <text>sn-glycerol 3-phosphate + NADP(+) = dihydroxyacetone phosphate + NADPH + H(+)</text>
        <dbReference type="Rhea" id="RHEA:11096"/>
        <dbReference type="ChEBI" id="CHEBI:15378"/>
        <dbReference type="ChEBI" id="CHEBI:57597"/>
        <dbReference type="ChEBI" id="CHEBI:57642"/>
        <dbReference type="ChEBI" id="CHEBI:57783"/>
        <dbReference type="ChEBI" id="CHEBI:58349"/>
        <dbReference type="EC" id="1.1.1.94"/>
    </reaction>
    <physiologicalReaction direction="right-to-left" evidence="1">
        <dbReference type="Rhea" id="RHEA:11098"/>
    </physiologicalReaction>
</comment>
<comment type="pathway">
    <text evidence="1">Membrane lipid metabolism; glycerophospholipid metabolism.</text>
</comment>
<comment type="subcellular location">
    <subcellularLocation>
        <location evidence="1">Cytoplasm</location>
    </subcellularLocation>
</comment>
<comment type="similarity">
    <text evidence="1">Belongs to the NAD-dependent glycerol-3-phosphate dehydrogenase family.</text>
</comment>
<reference key="1">
    <citation type="submission" date="2008-10" db="EMBL/GenBank/DDBJ databases">
        <title>The complete genome sequence of Helicobacter pylori strain P12.</title>
        <authorList>
            <person name="Fischer W."/>
            <person name="Windhager L."/>
            <person name="Karnholz A."/>
            <person name="Zeiller M."/>
            <person name="Zimmer R."/>
            <person name="Haas R."/>
        </authorList>
    </citation>
    <scope>NUCLEOTIDE SEQUENCE [LARGE SCALE GENOMIC DNA]</scope>
    <source>
        <strain>P12</strain>
    </source>
</reference>
<organism>
    <name type="scientific">Helicobacter pylori (strain P12)</name>
    <dbReference type="NCBI Taxonomy" id="570508"/>
    <lineage>
        <taxon>Bacteria</taxon>
        <taxon>Pseudomonadati</taxon>
        <taxon>Campylobacterota</taxon>
        <taxon>Epsilonproteobacteria</taxon>
        <taxon>Campylobacterales</taxon>
        <taxon>Helicobacteraceae</taxon>
        <taxon>Helicobacter</taxon>
    </lineage>
</organism>
<dbReference type="EC" id="1.1.1.94" evidence="1"/>
<dbReference type="EMBL" id="CP001217">
    <property type="protein sequence ID" value="ACJ08109.1"/>
    <property type="molecule type" value="Genomic_DNA"/>
</dbReference>
<dbReference type="SMR" id="B6JMI1"/>
<dbReference type="KEGG" id="hpp:HPP12_0957"/>
<dbReference type="HOGENOM" id="CLU_033449_0_2_7"/>
<dbReference type="UniPathway" id="UPA00940"/>
<dbReference type="Proteomes" id="UP000008198">
    <property type="component" value="Chromosome"/>
</dbReference>
<dbReference type="GO" id="GO:0005829">
    <property type="term" value="C:cytosol"/>
    <property type="evidence" value="ECO:0007669"/>
    <property type="project" value="TreeGrafter"/>
</dbReference>
<dbReference type="GO" id="GO:0047952">
    <property type="term" value="F:glycerol-3-phosphate dehydrogenase [NAD(P)+] activity"/>
    <property type="evidence" value="ECO:0007669"/>
    <property type="project" value="UniProtKB-UniRule"/>
</dbReference>
<dbReference type="GO" id="GO:0051287">
    <property type="term" value="F:NAD binding"/>
    <property type="evidence" value="ECO:0007669"/>
    <property type="project" value="InterPro"/>
</dbReference>
<dbReference type="GO" id="GO:0005975">
    <property type="term" value="P:carbohydrate metabolic process"/>
    <property type="evidence" value="ECO:0007669"/>
    <property type="project" value="InterPro"/>
</dbReference>
<dbReference type="GO" id="GO:0046167">
    <property type="term" value="P:glycerol-3-phosphate biosynthetic process"/>
    <property type="evidence" value="ECO:0007669"/>
    <property type="project" value="UniProtKB-UniRule"/>
</dbReference>
<dbReference type="GO" id="GO:0046168">
    <property type="term" value="P:glycerol-3-phosphate catabolic process"/>
    <property type="evidence" value="ECO:0007669"/>
    <property type="project" value="InterPro"/>
</dbReference>
<dbReference type="GO" id="GO:0006650">
    <property type="term" value="P:glycerophospholipid metabolic process"/>
    <property type="evidence" value="ECO:0007669"/>
    <property type="project" value="UniProtKB-UniRule"/>
</dbReference>
<dbReference type="GO" id="GO:0008654">
    <property type="term" value="P:phospholipid biosynthetic process"/>
    <property type="evidence" value="ECO:0007669"/>
    <property type="project" value="UniProtKB-KW"/>
</dbReference>
<dbReference type="FunFam" id="1.10.1040.10:FF:000025">
    <property type="entry name" value="Glycerol-3-phosphate dehydrogenase [NAD(P)+]"/>
    <property type="match status" value="1"/>
</dbReference>
<dbReference type="FunFam" id="3.40.50.720:FF:000310">
    <property type="entry name" value="Glycerol-3-phosphate dehydrogenase [NAD(P)+]"/>
    <property type="match status" value="1"/>
</dbReference>
<dbReference type="Gene3D" id="1.10.1040.10">
    <property type="entry name" value="N-(1-d-carboxylethyl)-l-norvaline Dehydrogenase, domain 2"/>
    <property type="match status" value="1"/>
</dbReference>
<dbReference type="Gene3D" id="3.40.50.720">
    <property type="entry name" value="NAD(P)-binding Rossmann-like Domain"/>
    <property type="match status" value="1"/>
</dbReference>
<dbReference type="HAMAP" id="MF_00394">
    <property type="entry name" value="NAD_Glyc3P_dehydrog"/>
    <property type="match status" value="1"/>
</dbReference>
<dbReference type="InterPro" id="IPR008927">
    <property type="entry name" value="6-PGluconate_DH-like_C_sf"/>
</dbReference>
<dbReference type="InterPro" id="IPR013328">
    <property type="entry name" value="6PGD_dom2"/>
</dbReference>
<dbReference type="InterPro" id="IPR006168">
    <property type="entry name" value="G3P_DH_NAD-dep"/>
</dbReference>
<dbReference type="InterPro" id="IPR006109">
    <property type="entry name" value="G3P_DH_NAD-dep_C"/>
</dbReference>
<dbReference type="InterPro" id="IPR011128">
    <property type="entry name" value="G3P_DH_NAD-dep_N"/>
</dbReference>
<dbReference type="InterPro" id="IPR036291">
    <property type="entry name" value="NAD(P)-bd_dom_sf"/>
</dbReference>
<dbReference type="NCBIfam" id="NF000940">
    <property type="entry name" value="PRK00094.1-2"/>
    <property type="match status" value="1"/>
</dbReference>
<dbReference type="NCBIfam" id="NF000942">
    <property type="entry name" value="PRK00094.1-4"/>
    <property type="match status" value="1"/>
</dbReference>
<dbReference type="NCBIfam" id="NF000943">
    <property type="entry name" value="PRK00094.2-1"/>
    <property type="match status" value="1"/>
</dbReference>
<dbReference type="PANTHER" id="PTHR11728">
    <property type="entry name" value="GLYCEROL-3-PHOSPHATE DEHYDROGENASE"/>
    <property type="match status" value="1"/>
</dbReference>
<dbReference type="PANTHER" id="PTHR11728:SF1">
    <property type="entry name" value="GLYCEROL-3-PHOSPHATE DEHYDROGENASE [NAD(+)] 2, CHLOROPLASTIC"/>
    <property type="match status" value="1"/>
</dbReference>
<dbReference type="Pfam" id="PF07479">
    <property type="entry name" value="NAD_Gly3P_dh_C"/>
    <property type="match status" value="1"/>
</dbReference>
<dbReference type="Pfam" id="PF01210">
    <property type="entry name" value="NAD_Gly3P_dh_N"/>
    <property type="match status" value="1"/>
</dbReference>
<dbReference type="PIRSF" id="PIRSF000114">
    <property type="entry name" value="Glycerol-3-P_dh"/>
    <property type="match status" value="1"/>
</dbReference>
<dbReference type="PRINTS" id="PR00077">
    <property type="entry name" value="GPDHDRGNASE"/>
</dbReference>
<dbReference type="SUPFAM" id="SSF48179">
    <property type="entry name" value="6-phosphogluconate dehydrogenase C-terminal domain-like"/>
    <property type="match status" value="1"/>
</dbReference>
<dbReference type="SUPFAM" id="SSF51735">
    <property type="entry name" value="NAD(P)-binding Rossmann-fold domains"/>
    <property type="match status" value="1"/>
</dbReference>
<dbReference type="PROSITE" id="PS00957">
    <property type="entry name" value="NAD_G3PDH"/>
    <property type="match status" value="1"/>
</dbReference>
<proteinExistence type="inferred from homology"/>
<evidence type="ECO:0000255" key="1">
    <source>
        <dbReference type="HAMAP-Rule" id="MF_00394"/>
    </source>
</evidence>
<feature type="chain" id="PRO_1000190157" description="Glycerol-3-phosphate dehydrogenase [NAD(P)+]">
    <location>
        <begin position="1"/>
        <end position="312"/>
    </location>
</feature>
<feature type="active site" description="Proton acceptor" evidence="1">
    <location>
        <position position="177"/>
    </location>
</feature>
<feature type="binding site" evidence="1">
    <location>
        <position position="11"/>
    </location>
    <ligand>
        <name>NADPH</name>
        <dbReference type="ChEBI" id="CHEBI:57783"/>
    </ligand>
</feature>
<feature type="binding site" evidence="1">
    <location>
        <position position="30"/>
    </location>
    <ligand>
        <name>NADPH</name>
        <dbReference type="ChEBI" id="CHEBI:57783"/>
    </ligand>
</feature>
<feature type="binding site" evidence="1">
    <location>
        <position position="31"/>
    </location>
    <ligand>
        <name>NADPH</name>
        <dbReference type="ChEBI" id="CHEBI:57783"/>
    </ligand>
</feature>
<feature type="binding site" evidence="1">
    <location>
        <position position="95"/>
    </location>
    <ligand>
        <name>NADPH</name>
        <dbReference type="ChEBI" id="CHEBI:57783"/>
    </ligand>
</feature>
<feature type="binding site" evidence="1">
    <location>
        <position position="95"/>
    </location>
    <ligand>
        <name>sn-glycerol 3-phosphate</name>
        <dbReference type="ChEBI" id="CHEBI:57597"/>
    </ligand>
</feature>
<feature type="binding site" evidence="1">
    <location>
        <position position="123"/>
    </location>
    <ligand>
        <name>sn-glycerol 3-phosphate</name>
        <dbReference type="ChEBI" id="CHEBI:57597"/>
    </ligand>
</feature>
<feature type="binding site" evidence="1">
    <location>
        <position position="125"/>
    </location>
    <ligand>
        <name>sn-glycerol 3-phosphate</name>
        <dbReference type="ChEBI" id="CHEBI:57597"/>
    </ligand>
</feature>
<feature type="binding site" evidence="1">
    <location>
        <position position="127"/>
    </location>
    <ligand>
        <name>NADPH</name>
        <dbReference type="ChEBI" id="CHEBI:57783"/>
    </ligand>
</feature>
<feature type="binding site" evidence="1">
    <location>
        <position position="177"/>
    </location>
    <ligand>
        <name>sn-glycerol 3-phosphate</name>
        <dbReference type="ChEBI" id="CHEBI:57597"/>
    </ligand>
</feature>
<feature type="binding site" evidence="1">
    <location>
        <position position="230"/>
    </location>
    <ligand>
        <name>sn-glycerol 3-phosphate</name>
        <dbReference type="ChEBI" id="CHEBI:57597"/>
    </ligand>
</feature>
<feature type="binding site" evidence="1">
    <location>
        <position position="240"/>
    </location>
    <ligand>
        <name>sn-glycerol 3-phosphate</name>
        <dbReference type="ChEBI" id="CHEBI:57597"/>
    </ligand>
</feature>
<feature type="binding site" evidence="1">
    <location>
        <position position="241"/>
    </location>
    <ligand>
        <name>NADPH</name>
        <dbReference type="ChEBI" id="CHEBI:57783"/>
    </ligand>
</feature>
<feature type="binding site" evidence="1">
    <location>
        <position position="241"/>
    </location>
    <ligand>
        <name>sn-glycerol 3-phosphate</name>
        <dbReference type="ChEBI" id="CHEBI:57597"/>
    </ligand>
</feature>
<feature type="binding site" evidence="1">
    <location>
        <position position="242"/>
    </location>
    <ligand>
        <name>sn-glycerol 3-phosphate</name>
        <dbReference type="ChEBI" id="CHEBI:57597"/>
    </ligand>
</feature>
<feature type="binding site" evidence="1">
    <location>
        <position position="265"/>
    </location>
    <ligand>
        <name>NADPH</name>
        <dbReference type="ChEBI" id="CHEBI:57783"/>
    </ligand>
</feature>
<feature type="binding site" evidence="1">
    <location>
        <position position="267"/>
    </location>
    <ligand>
        <name>NADPH</name>
        <dbReference type="ChEBI" id="CHEBI:57783"/>
    </ligand>
</feature>
<keyword id="KW-0963">Cytoplasm</keyword>
<keyword id="KW-0444">Lipid biosynthesis</keyword>
<keyword id="KW-0443">Lipid metabolism</keyword>
<keyword id="KW-0520">NAD</keyword>
<keyword id="KW-0521">NADP</keyword>
<keyword id="KW-0547">Nucleotide-binding</keyword>
<keyword id="KW-0560">Oxidoreductase</keyword>
<keyword id="KW-0594">Phospholipid biosynthesis</keyword>
<keyword id="KW-1208">Phospholipid metabolism</keyword>
<sequence>MEIAVFGGGAWGRALAFAFGEKNEVKIISRRDLNEPLKKLNDALISKGSAPIEQVDLQRGLKATLYVIAISVQHLREWFQNASLPKNAKVLIASKGIEVLNRAFVSEIAKDFIDPNSLCFLAGPSFAAEIIQGLPCALVIHSNNQALALEFANKTPSFIRAYAQQDIIGGEIAGAYKNVIAIAGGVCDGLKLGNSAKASLLSRGLVEMQRFGAFFGGKTETFLGLSGAGDLFLTANSILSRNYRVGLGLAQNKPLEVVLEELGEVAEGVKTTNAIVEIARKYGIYTPIASELALLLKGKSVLESMNDLIRRA</sequence>
<gene>
    <name evidence="1" type="primary">gpsA</name>
    <name type="ordered locus">HPP12_0957</name>
</gene>
<accession>B6JMI1</accession>
<name>GPDA_HELP2</name>
<protein>
    <recommendedName>
        <fullName evidence="1">Glycerol-3-phosphate dehydrogenase [NAD(P)+]</fullName>
        <ecNumber evidence="1">1.1.1.94</ecNumber>
    </recommendedName>
    <alternativeName>
        <fullName evidence="1">NAD(P)(+)-dependent glycerol-3-phosphate dehydrogenase</fullName>
    </alternativeName>
    <alternativeName>
        <fullName evidence="1">NAD(P)H-dependent dihydroxyacetone-phosphate reductase</fullName>
    </alternativeName>
</protein>